<protein>
    <recommendedName>
        <fullName evidence="1">ATP synthase subunit c, chloroplastic</fullName>
    </recommendedName>
    <alternativeName>
        <fullName evidence="1">ATP synthase F(0) sector subunit c</fullName>
    </alternativeName>
    <alternativeName>
        <fullName evidence="1">ATPase subunit III</fullName>
    </alternativeName>
    <alternativeName>
        <fullName evidence="1">F-type ATPase subunit c</fullName>
        <shortName evidence="1">F-ATPase subunit c</shortName>
    </alternativeName>
    <alternativeName>
        <fullName evidence="1">Lipid-binding protein</fullName>
    </alternativeName>
</protein>
<name>ATPH_CYACA</name>
<dbReference type="EMBL" id="AF022186">
    <property type="protein sequence ID" value="AAF13009.1"/>
    <property type="molecule type" value="Genomic_DNA"/>
</dbReference>
<dbReference type="RefSeq" id="NP_045037.1">
    <property type="nucleotide sequence ID" value="NC_001840.1"/>
</dbReference>
<dbReference type="SMR" id="Q9TM30"/>
<dbReference type="GeneID" id="800154"/>
<dbReference type="GO" id="GO:0009535">
    <property type="term" value="C:chloroplast thylakoid membrane"/>
    <property type="evidence" value="ECO:0007669"/>
    <property type="project" value="UniProtKB-SubCell"/>
</dbReference>
<dbReference type="GO" id="GO:0045259">
    <property type="term" value="C:proton-transporting ATP synthase complex"/>
    <property type="evidence" value="ECO:0007669"/>
    <property type="project" value="UniProtKB-KW"/>
</dbReference>
<dbReference type="GO" id="GO:0033177">
    <property type="term" value="C:proton-transporting two-sector ATPase complex, proton-transporting domain"/>
    <property type="evidence" value="ECO:0007669"/>
    <property type="project" value="InterPro"/>
</dbReference>
<dbReference type="GO" id="GO:0008289">
    <property type="term" value="F:lipid binding"/>
    <property type="evidence" value="ECO:0007669"/>
    <property type="project" value="UniProtKB-KW"/>
</dbReference>
<dbReference type="GO" id="GO:0046933">
    <property type="term" value="F:proton-transporting ATP synthase activity, rotational mechanism"/>
    <property type="evidence" value="ECO:0007669"/>
    <property type="project" value="UniProtKB-UniRule"/>
</dbReference>
<dbReference type="CDD" id="cd18183">
    <property type="entry name" value="ATP-synt_Fo_c_ATPH"/>
    <property type="match status" value="1"/>
</dbReference>
<dbReference type="FunFam" id="1.20.20.10:FF:000001">
    <property type="entry name" value="ATP synthase subunit c, chloroplastic"/>
    <property type="match status" value="1"/>
</dbReference>
<dbReference type="Gene3D" id="1.20.20.10">
    <property type="entry name" value="F1F0 ATP synthase subunit C"/>
    <property type="match status" value="1"/>
</dbReference>
<dbReference type="HAMAP" id="MF_01396">
    <property type="entry name" value="ATP_synth_c_bact"/>
    <property type="match status" value="1"/>
</dbReference>
<dbReference type="InterPro" id="IPR005953">
    <property type="entry name" value="ATP_synth_csu_bac/chlpt"/>
</dbReference>
<dbReference type="InterPro" id="IPR000454">
    <property type="entry name" value="ATP_synth_F0_csu"/>
</dbReference>
<dbReference type="InterPro" id="IPR020537">
    <property type="entry name" value="ATP_synth_F0_csu_DDCD_BS"/>
</dbReference>
<dbReference type="InterPro" id="IPR038662">
    <property type="entry name" value="ATP_synth_F0_csu_sf"/>
</dbReference>
<dbReference type="InterPro" id="IPR002379">
    <property type="entry name" value="ATPase_proteolipid_c-like_dom"/>
</dbReference>
<dbReference type="InterPro" id="IPR035921">
    <property type="entry name" value="F/V-ATP_Csub_sf"/>
</dbReference>
<dbReference type="NCBIfam" id="TIGR01260">
    <property type="entry name" value="ATP_synt_c"/>
    <property type="match status" value="1"/>
</dbReference>
<dbReference type="NCBIfam" id="NF005608">
    <property type="entry name" value="PRK07354.1"/>
    <property type="match status" value="1"/>
</dbReference>
<dbReference type="PANTHER" id="PTHR10031">
    <property type="entry name" value="ATP SYNTHASE LIPID-BINDING PROTEIN, MITOCHONDRIAL"/>
    <property type="match status" value="1"/>
</dbReference>
<dbReference type="PANTHER" id="PTHR10031:SF0">
    <property type="entry name" value="ATPASE PROTEIN 9"/>
    <property type="match status" value="1"/>
</dbReference>
<dbReference type="Pfam" id="PF00137">
    <property type="entry name" value="ATP-synt_C"/>
    <property type="match status" value="1"/>
</dbReference>
<dbReference type="PRINTS" id="PR00124">
    <property type="entry name" value="ATPASEC"/>
</dbReference>
<dbReference type="SUPFAM" id="SSF81333">
    <property type="entry name" value="F1F0 ATP synthase subunit C"/>
    <property type="match status" value="1"/>
</dbReference>
<dbReference type="PROSITE" id="PS00605">
    <property type="entry name" value="ATPASE_C"/>
    <property type="match status" value="1"/>
</dbReference>
<evidence type="ECO:0000255" key="1">
    <source>
        <dbReference type="HAMAP-Rule" id="MF_01396"/>
    </source>
</evidence>
<organism>
    <name type="scientific">Cyanidium caldarium</name>
    <name type="common">Red alga</name>
    <dbReference type="NCBI Taxonomy" id="2771"/>
    <lineage>
        <taxon>Eukaryota</taxon>
        <taxon>Rhodophyta</taxon>
        <taxon>Bangiophyceae</taxon>
        <taxon>Cyanidiales</taxon>
        <taxon>Cyanidiaceae</taxon>
        <taxon>Cyanidium</taxon>
    </lineage>
</organism>
<reference key="1">
    <citation type="journal article" date="2000" name="J. Mol. Evol.">
        <title>The structure and gene repertoire of an ancient red algal plastid genome.</title>
        <authorList>
            <person name="Gloeckner G."/>
            <person name="Rosenthal A."/>
            <person name="Valentin K.-U."/>
        </authorList>
    </citation>
    <scope>NUCLEOTIDE SEQUENCE [LARGE SCALE GENOMIC DNA]</scope>
    <source>
        <strain>RK-1</strain>
    </source>
</reference>
<comment type="function">
    <text evidence="1">F(1)F(0) ATP synthase produces ATP from ADP in the presence of a proton or sodium gradient. F-type ATPases consist of two structural domains, F(1) containing the extramembraneous catalytic core and F(0) containing the membrane proton channel, linked together by a central stalk and a peripheral stalk. During catalysis, ATP synthesis in the catalytic domain of F(1) is coupled via a rotary mechanism of the central stalk subunits to proton translocation.</text>
</comment>
<comment type="function">
    <text evidence="1">Key component of the F(0) channel; it plays a direct role in translocation across the membrane. A homomeric c-ring of between 10-14 subunits forms the central stalk rotor element with the F(1) delta and epsilon subunits.</text>
</comment>
<comment type="subunit">
    <text evidence="1">F-type ATPases have 2 components, F(1) - the catalytic core - and F(0) - the membrane proton channel. F(1) has five subunits: alpha(3), beta(3), gamma(1), delta(1), epsilon(1). F(0) has four main subunits: a(1), b(1), b'(1) and c(10-14). The alpha and beta chains form an alternating ring which encloses part of the gamma chain. F(1) is attached to F(0) by a central stalk formed by the gamma and epsilon chains, while a peripheral stalk is formed by the delta, b and b' chains.</text>
</comment>
<comment type="subcellular location">
    <subcellularLocation>
        <location evidence="1">Plastid</location>
        <location evidence="1">Chloroplast thylakoid membrane</location>
        <topology evidence="1">Multi-pass membrane protein</topology>
    </subcellularLocation>
</comment>
<comment type="miscellaneous">
    <text>In plastids the F-type ATPase is also known as CF(1)CF(0).</text>
</comment>
<comment type="similarity">
    <text evidence="1">Belongs to the ATPase C chain family.</text>
</comment>
<geneLocation type="chloroplast"/>
<gene>
    <name evidence="1" type="primary">atpH</name>
</gene>
<proteinExistence type="inferred from homology"/>
<feature type="chain" id="PRO_0000112186" description="ATP synthase subunit c, chloroplastic">
    <location>
        <begin position="1"/>
        <end position="82"/>
    </location>
</feature>
<feature type="transmembrane region" description="Helical" evidence="1">
    <location>
        <begin position="3"/>
        <end position="23"/>
    </location>
</feature>
<feature type="transmembrane region" description="Helical" evidence="1">
    <location>
        <begin position="57"/>
        <end position="77"/>
    </location>
</feature>
<feature type="site" description="Reversibly protonated during proton transport" evidence="1">
    <location>
        <position position="61"/>
    </location>
</feature>
<accession>Q9TM30</accession>
<keyword id="KW-0066">ATP synthesis</keyword>
<keyword id="KW-0138">CF(0)</keyword>
<keyword id="KW-0150">Chloroplast</keyword>
<keyword id="KW-0375">Hydrogen ion transport</keyword>
<keyword id="KW-0406">Ion transport</keyword>
<keyword id="KW-0446">Lipid-binding</keyword>
<keyword id="KW-0472">Membrane</keyword>
<keyword id="KW-0934">Plastid</keyword>
<keyword id="KW-0793">Thylakoid</keyword>
<keyword id="KW-0812">Transmembrane</keyword>
<keyword id="KW-1133">Transmembrane helix</keyword>
<keyword id="KW-0813">Transport</keyword>
<sequence>MDPIISAASVIAAGLAVGLAAIGPGIGQGSAAANAVEGLARQPEAEGKIRGTLLLSLAFMESLTIYGLVVALSLLFANPFIK</sequence>